<feature type="chain" id="PRO_0000115227" description="Endonuclease MutS2">
    <location>
        <begin position="1"/>
        <end position="782"/>
    </location>
</feature>
<feature type="domain" description="Smr" evidence="1">
    <location>
        <begin position="707"/>
        <end position="782"/>
    </location>
</feature>
<feature type="binding site" evidence="1">
    <location>
        <begin position="336"/>
        <end position="343"/>
    </location>
    <ligand>
        <name>ATP</name>
        <dbReference type="ChEBI" id="CHEBI:30616"/>
    </ligand>
</feature>
<gene>
    <name evidence="1" type="primary">mutS2</name>
    <name evidence="1" type="synonym">rqcU</name>
    <name type="ordered locus">SACOL1154</name>
</gene>
<accession>Q5HGU0</accession>
<protein>
    <recommendedName>
        <fullName evidence="1">Endonuclease MutS2</fullName>
        <ecNumber evidence="1">3.1.-.-</ecNumber>
    </recommendedName>
    <alternativeName>
        <fullName evidence="1">Ribosome-associated protein quality control-upstream factor</fullName>
        <shortName evidence="1">RQC-upstream factor</shortName>
        <shortName evidence="1">RqcU</shortName>
        <ecNumber evidence="1">3.6.4.-</ecNumber>
    </alternativeName>
</protein>
<dbReference type="EC" id="3.1.-.-" evidence="1"/>
<dbReference type="EC" id="3.6.4.-" evidence="1"/>
<dbReference type="EMBL" id="CP000046">
    <property type="protein sequence ID" value="AAW38033.1"/>
    <property type="molecule type" value="Genomic_DNA"/>
</dbReference>
<dbReference type="RefSeq" id="WP_001249285.1">
    <property type="nucleotide sequence ID" value="NZ_JBGOFO010000002.1"/>
</dbReference>
<dbReference type="SMR" id="Q5HGU0"/>
<dbReference type="KEGG" id="sac:SACOL1154"/>
<dbReference type="HOGENOM" id="CLU_011252_2_1_9"/>
<dbReference type="Proteomes" id="UP000000530">
    <property type="component" value="Chromosome"/>
</dbReference>
<dbReference type="GO" id="GO:0005524">
    <property type="term" value="F:ATP binding"/>
    <property type="evidence" value="ECO:0007669"/>
    <property type="project" value="UniProtKB-UniRule"/>
</dbReference>
<dbReference type="GO" id="GO:0016887">
    <property type="term" value="F:ATP hydrolysis activity"/>
    <property type="evidence" value="ECO:0007669"/>
    <property type="project" value="InterPro"/>
</dbReference>
<dbReference type="GO" id="GO:0140664">
    <property type="term" value="F:ATP-dependent DNA damage sensor activity"/>
    <property type="evidence" value="ECO:0007669"/>
    <property type="project" value="InterPro"/>
</dbReference>
<dbReference type="GO" id="GO:0004519">
    <property type="term" value="F:endonuclease activity"/>
    <property type="evidence" value="ECO:0007669"/>
    <property type="project" value="UniProtKB-UniRule"/>
</dbReference>
<dbReference type="GO" id="GO:0030983">
    <property type="term" value="F:mismatched DNA binding"/>
    <property type="evidence" value="ECO:0007669"/>
    <property type="project" value="InterPro"/>
</dbReference>
<dbReference type="GO" id="GO:0043023">
    <property type="term" value="F:ribosomal large subunit binding"/>
    <property type="evidence" value="ECO:0007669"/>
    <property type="project" value="UniProtKB-UniRule"/>
</dbReference>
<dbReference type="GO" id="GO:0019843">
    <property type="term" value="F:rRNA binding"/>
    <property type="evidence" value="ECO:0007669"/>
    <property type="project" value="UniProtKB-UniRule"/>
</dbReference>
<dbReference type="GO" id="GO:0006298">
    <property type="term" value="P:mismatch repair"/>
    <property type="evidence" value="ECO:0007669"/>
    <property type="project" value="InterPro"/>
</dbReference>
<dbReference type="GO" id="GO:0045910">
    <property type="term" value="P:negative regulation of DNA recombination"/>
    <property type="evidence" value="ECO:0007669"/>
    <property type="project" value="InterPro"/>
</dbReference>
<dbReference type="GO" id="GO:0072344">
    <property type="term" value="P:rescue of stalled ribosome"/>
    <property type="evidence" value="ECO:0007669"/>
    <property type="project" value="UniProtKB-UniRule"/>
</dbReference>
<dbReference type="CDD" id="cd03280">
    <property type="entry name" value="ABC_MutS2"/>
    <property type="match status" value="1"/>
</dbReference>
<dbReference type="FunFam" id="3.30.1370.110:FF:000006">
    <property type="entry name" value="Endonuclease MutS2"/>
    <property type="match status" value="1"/>
</dbReference>
<dbReference type="FunFam" id="3.40.50.300:FF:000830">
    <property type="entry name" value="Endonuclease MutS2"/>
    <property type="match status" value="1"/>
</dbReference>
<dbReference type="Gene3D" id="3.30.1370.110">
    <property type="match status" value="1"/>
</dbReference>
<dbReference type="Gene3D" id="3.40.50.300">
    <property type="entry name" value="P-loop containing nucleotide triphosphate hydrolases"/>
    <property type="match status" value="1"/>
</dbReference>
<dbReference type="HAMAP" id="MF_00092">
    <property type="entry name" value="MutS2"/>
    <property type="match status" value="1"/>
</dbReference>
<dbReference type="InterPro" id="IPR000432">
    <property type="entry name" value="DNA_mismatch_repair_MutS_C"/>
</dbReference>
<dbReference type="InterPro" id="IPR007696">
    <property type="entry name" value="DNA_mismatch_repair_MutS_core"/>
</dbReference>
<dbReference type="InterPro" id="IPR036187">
    <property type="entry name" value="DNA_mismatch_repair_MutS_sf"/>
</dbReference>
<dbReference type="InterPro" id="IPR046893">
    <property type="entry name" value="MSSS"/>
</dbReference>
<dbReference type="InterPro" id="IPR045076">
    <property type="entry name" value="MutS"/>
</dbReference>
<dbReference type="InterPro" id="IPR005747">
    <property type="entry name" value="MutS2"/>
</dbReference>
<dbReference type="InterPro" id="IPR027417">
    <property type="entry name" value="P-loop_NTPase"/>
</dbReference>
<dbReference type="InterPro" id="IPR002625">
    <property type="entry name" value="Smr_dom"/>
</dbReference>
<dbReference type="InterPro" id="IPR036063">
    <property type="entry name" value="Smr_dom_sf"/>
</dbReference>
<dbReference type="NCBIfam" id="TIGR01069">
    <property type="entry name" value="mutS2"/>
    <property type="match status" value="1"/>
</dbReference>
<dbReference type="PANTHER" id="PTHR48466:SF2">
    <property type="entry name" value="OS10G0509000 PROTEIN"/>
    <property type="match status" value="1"/>
</dbReference>
<dbReference type="PANTHER" id="PTHR48466">
    <property type="entry name" value="OS10G0509000 PROTEIN-RELATED"/>
    <property type="match status" value="1"/>
</dbReference>
<dbReference type="Pfam" id="PF20297">
    <property type="entry name" value="MSSS"/>
    <property type="match status" value="1"/>
</dbReference>
<dbReference type="Pfam" id="PF00488">
    <property type="entry name" value="MutS_V"/>
    <property type="match status" value="1"/>
</dbReference>
<dbReference type="Pfam" id="PF01713">
    <property type="entry name" value="Smr"/>
    <property type="match status" value="1"/>
</dbReference>
<dbReference type="PIRSF" id="PIRSF005814">
    <property type="entry name" value="MutS_YshD"/>
    <property type="match status" value="1"/>
</dbReference>
<dbReference type="SMART" id="SM00534">
    <property type="entry name" value="MUTSac"/>
    <property type="match status" value="1"/>
</dbReference>
<dbReference type="SMART" id="SM00533">
    <property type="entry name" value="MUTSd"/>
    <property type="match status" value="1"/>
</dbReference>
<dbReference type="SMART" id="SM00463">
    <property type="entry name" value="SMR"/>
    <property type="match status" value="1"/>
</dbReference>
<dbReference type="SUPFAM" id="SSF48334">
    <property type="entry name" value="DNA repair protein MutS, domain III"/>
    <property type="match status" value="1"/>
</dbReference>
<dbReference type="SUPFAM" id="SSF52540">
    <property type="entry name" value="P-loop containing nucleoside triphosphate hydrolases"/>
    <property type="match status" value="1"/>
</dbReference>
<dbReference type="SUPFAM" id="SSF160443">
    <property type="entry name" value="SMR domain-like"/>
    <property type="match status" value="1"/>
</dbReference>
<dbReference type="PROSITE" id="PS00486">
    <property type="entry name" value="DNA_MISMATCH_REPAIR_2"/>
    <property type="match status" value="1"/>
</dbReference>
<dbReference type="PROSITE" id="PS50828">
    <property type="entry name" value="SMR"/>
    <property type="match status" value="1"/>
</dbReference>
<proteinExistence type="inferred from homology"/>
<comment type="function">
    <text evidence="1">Endonuclease that is involved in the suppression of homologous recombination and thus may have a key role in the control of bacterial genetic diversity.</text>
</comment>
<comment type="function">
    <text evidence="1">Acts as a ribosome collision sensor, splitting the ribosome into its 2 subunits. Detects stalled/collided 70S ribosomes which it binds and splits by an ATP-hydrolysis driven conformational change. Acts upstream of the ribosome quality control system (RQC), a ribosome-associated complex that mediates the extraction of incompletely synthesized nascent chains from stalled ribosomes and their subsequent degradation. Probably generates substrates for RQC.</text>
</comment>
<comment type="subunit">
    <text evidence="1">Homodimer. Binds to stalled ribosomes, contacting rRNA.</text>
</comment>
<comment type="similarity">
    <text evidence="1">Belongs to the DNA mismatch repair MutS family. MutS2 subfamily.</text>
</comment>
<keyword id="KW-0067">ATP-binding</keyword>
<keyword id="KW-0238">DNA-binding</keyword>
<keyword id="KW-0255">Endonuclease</keyword>
<keyword id="KW-0378">Hydrolase</keyword>
<keyword id="KW-0540">Nuclease</keyword>
<keyword id="KW-0547">Nucleotide-binding</keyword>
<keyword id="KW-0694">RNA-binding</keyword>
<keyword id="KW-0699">rRNA-binding</keyword>
<name>MUTS2_STAAC</name>
<sequence>MRQKTLDVLEFEKIKSLVANETISDLGLEKVNQMMPATNFETVVFQMEETDEIAQIYNKHRLPSLSGLSKVSAFIHRADIGGVLNVSELNLIKRLIQVQNQFKTFYNQLVEEDEGVKYPILDDKMNQLPVLTDLFQQINETCDTYDLYDNASYELQGIRSKISSTNQRIRQNLDRIVKSQANQKKLSDAIVTVRNERNVIPVKAEYRQDFNGIVHDQSASGQTLYIEPSSVVEMNNQISRLRHDEAIEKERILTQLTGYVAADKDALLVAEQVMGQLDFLIAKARYSRSIKGTKPIFKEDRTVYLPKAYHPLLNRETVVANTIEFMEDIETVIITGPNTGGKTVTLKTLGLIIVMAQSGLLIPTLDGSQLSVFKNVYCDIGDEQSIEQSLSTFSSHMTNIVEILKHADKHSLVLFDELGAGTDPSEGAALAMSILDHVRKIGSLVMATTHYPELKAYSYNREGVMNASVEFDVDTLSPTYKLLMGVPGRSNAFDISKKLGLSLNIINKAKTMIGTDEKEINEMIESLERNYKRVETQRLELDRLVKEAEQVHDDLSKQYQQFQNYEKSLIEEAKEKANQKIKAATKEADDIIKDLRQLREQKGADVKEHELIDKKKRLDDHYEAKSIKQNVQKQKYDKIVAGDEVKVLSYGQKGEVLEIVNDEEAIVQMGIIKMKLPIEDLEKKQKEKVKPTKMVTRQNRQTIKTELDLRGYRYEDALIELDQYLDQAVLSNYEQVYIIHGKGTGALQKGVQQHLKKHKSVSDFRGGMPSEGGFGVTVATLK</sequence>
<organism>
    <name type="scientific">Staphylococcus aureus (strain COL)</name>
    <dbReference type="NCBI Taxonomy" id="93062"/>
    <lineage>
        <taxon>Bacteria</taxon>
        <taxon>Bacillati</taxon>
        <taxon>Bacillota</taxon>
        <taxon>Bacilli</taxon>
        <taxon>Bacillales</taxon>
        <taxon>Staphylococcaceae</taxon>
        <taxon>Staphylococcus</taxon>
    </lineage>
</organism>
<reference key="1">
    <citation type="journal article" date="2005" name="J. Bacteriol.">
        <title>Insights on evolution of virulence and resistance from the complete genome analysis of an early methicillin-resistant Staphylococcus aureus strain and a biofilm-producing methicillin-resistant Staphylococcus epidermidis strain.</title>
        <authorList>
            <person name="Gill S.R."/>
            <person name="Fouts D.E."/>
            <person name="Archer G.L."/>
            <person name="Mongodin E.F."/>
            <person name="DeBoy R.T."/>
            <person name="Ravel J."/>
            <person name="Paulsen I.T."/>
            <person name="Kolonay J.F."/>
            <person name="Brinkac L.M."/>
            <person name="Beanan M.J."/>
            <person name="Dodson R.J."/>
            <person name="Daugherty S.C."/>
            <person name="Madupu R."/>
            <person name="Angiuoli S.V."/>
            <person name="Durkin A.S."/>
            <person name="Haft D.H."/>
            <person name="Vamathevan J.J."/>
            <person name="Khouri H."/>
            <person name="Utterback T.R."/>
            <person name="Lee C."/>
            <person name="Dimitrov G."/>
            <person name="Jiang L."/>
            <person name="Qin H."/>
            <person name="Weidman J."/>
            <person name="Tran K."/>
            <person name="Kang K.H."/>
            <person name="Hance I.R."/>
            <person name="Nelson K.E."/>
            <person name="Fraser C.M."/>
        </authorList>
    </citation>
    <scope>NUCLEOTIDE SEQUENCE [LARGE SCALE GENOMIC DNA]</scope>
    <source>
        <strain>COL</strain>
    </source>
</reference>
<evidence type="ECO:0000255" key="1">
    <source>
        <dbReference type="HAMAP-Rule" id="MF_00092"/>
    </source>
</evidence>